<keyword id="KW-0217">Developmental protein</keyword>
<keyword id="KW-0221">Differentiation</keyword>
<keyword id="KW-0238">DNA-binding</keyword>
<keyword id="KW-0539">Nucleus</keyword>
<keyword id="KW-0597">Phosphoprotein</keyword>
<keyword id="KW-1185">Reference proteome</keyword>
<keyword id="KW-0804">Transcription</keyword>
<keyword id="KW-0805">Transcription regulation</keyword>
<proteinExistence type="evidence at protein level"/>
<evidence type="ECO:0000255" key="1">
    <source>
        <dbReference type="PROSITE-ProRule" id="PRU00981"/>
    </source>
</evidence>
<evidence type="ECO:0000256" key="2">
    <source>
        <dbReference type="SAM" id="MobiDB-lite"/>
    </source>
</evidence>
<evidence type="ECO:0000269" key="3">
    <source>
    </source>
</evidence>
<evidence type="ECO:0000269" key="4">
    <source>
    </source>
</evidence>
<evidence type="ECO:0000269" key="5">
    <source>
    </source>
</evidence>
<evidence type="ECO:0000269" key="6">
    <source>
    </source>
</evidence>
<evidence type="ECO:0000305" key="7"/>
<reference key="1">
    <citation type="journal article" date="1988" name="EMBO J.">
        <title>Sequence of the twist gene and nuclear localization of its protein in endomesodermal cells of early Drosophila embryos.</title>
        <authorList>
            <person name="Thisse B."/>
            <person name="Stoetzel C."/>
            <person name="Gorostiza-Thisse C."/>
            <person name="Perrin-Schmitt F."/>
        </authorList>
    </citation>
    <scope>NUCLEOTIDE SEQUENCE [GENOMIC DNA / MRNA]</scope>
    <scope>FUNCTION</scope>
    <scope>SUBCELLULAR LOCATION</scope>
    <scope>DISRUPTION PHENOTYPE</scope>
    <source>
        <strain>Oregon-R</strain>
    </source>
</reference>
<reference key="2">
    <citation type="journal article" date="2000" name="Science">
        <title>The genome sequence of Drosophila melanogaster.</title>
        <authorList>
            <person name="Adams M.D."/>
            <person name="Celniker S.E."/>
            <person name="Holt R.A."/>
            <person name="Evans C.A."/>
            <person name="Gocayne J.D."/>
            <person name="Amanatides P.G."/>
            <person name="Scherer S.E."/>
            <person name="Li P.W."/>
            <person name="Hoskins R.A."/>
            <person name="Galle R.F."/>
            <person name="George R.A."/>
            <person name="Lewis S.E."/>
            <person name="Richards S."/>
            <person name="Ashburner M."/>
            <person name="Henderson S.N."/>
            <person name="Sutton G.G."/>
            <person name="Wortman J.R."/>
            <person name="Yandell M.D."/>
            <person name="Zhang Q."/>
            <person name="Chen L.X."/>
            <person name="Brandon R.C."/>
            <person name="Rogers Y.-H.C."/>
            <person name="Blazej R.G."/>
            <person name="Champe M."/>
            <person name="Pfeiffer B.D."/>
            <person name="Wan K.H."/>
            <person name="Doyle C."/>
            <person name="Baxter E.G."/>
            <person name="Helt G."/>
            <person name="Nelson C.R."/>
            <person name="Miklos G.L.G."/>
            <person name="Abril J.F."/>
            <person name="Agbayani A."/>
            <person name="An H.-J."/>
            <person name="Andrews-Pfannkoch C."/>
            <person name="Baldwin D."/>
            <person name="Ballew R.M."/>
            <person name="Basu A."/>
            <person name="Baxendale J."/>
            <person name="Bayraktaroglu L."/>
            <person name="Beasley E.M."/>
            <person name="Beeson K.Y."/>
            <person name="Benos P.V."/>
            <person name="Berman B.P."/>
            <person name="Bhandari D."/>
            <person name="Bolshakov S."/>
            <person name="Borkova D."/>
            <person name="Botchan M.R."/>
            <person name="Bouck J."/>
            <person name="Brokstein P."/>
            <person name="Brottier P."/>
            <person name="Burtis K.C."/>
            <person name="Busam D.A."/>
            <person name="Butler H."/>
            <person name="Cadieu E."/>
            <person name="Center A."/>
            <person name="Chandra I."/>
            <person name="Cherry J.M."/>
            <person name="Cawley S."/>
            <person name="Dahlke C."/>
            <person name="Davenport L.B."/>
            <person name="Davies P."/>
            <person name="de Pablos B."/>
            <person name="Delcher A."/>
            <person name="Deng Z."/>
            <person name="Mays A.D."/>
            <person name="Dew I."/>
            <person name="Dietz S.M."/>
            <person name="Dodson K."/>
            <person name="Doup L.E."/>
            <person name="Downes M."/>
            <person name="Dugan-Rocha S."/>
            <person name="Dunkov B.C."/>
            <person name="Dunn P."/>
            <person name="Durbin K.J."/>
            <person name="Evangelista C.C."/>
            <person name="Ferraz C."/>
            <person name="Ferriera S."/>
            <person name="Fleischmann W."/>
            <person name="Fosler C."/>
            <person name="Gabrielian A.E."/>
            <person name="Garg N.S."/>
            <person name="Gelbart W.M."/>
            <person name="Glasser K."/>
            <person name="Glodek A."/>
            <person name="Gong F."/>
            <person name="Gorrell J.H."/>
            <person name="Gu Z."/>
            <person name="Guan P."/>
            <person name="Harris M."/>
            <person name="Harris N.L."/>
            <person name="Harvey D.A."/>
            <person name="Heiman T.J."/>
            <person name="Hernandez J.R."/>
            <person name="Houck J."/>
            <person name="Hostin D."/>
            <person name="Houston K.A."/>
            <person name="Howland T.J."/>
            <person name="Wei M.-H."/>
            <person name="Ibegwam C."/>
            <person name="Jalali M."/>
            <person name="Kalush F."/>
            <person name="Karpen G.H."/>
            <person name="Ke Z."/>
            <person name="Kennison J.A."/>
            <person name="Ketchum K.A."/>
            <person name="Kimmel B.E."/>
            <person name="Kodira C.D."/>
            <person name="Kraft C.L."/>
            <person name="Kravitz S."/>
            <person name="Kulp D."/>
            <person name="Lai Z."/>
            <person name="Lasko P."/>
            <person name="Lei Y."/>
            <person name="Levitsky A.A."/>
            <person name="Li J.H."/>
            <person name="Li Z."/>
            <person name="Liang Y."/>
            <person name="Lin X."/>
            <person name="Liu X."/>
            <person name="Mattei B."/>
            <person name="McIntosh T.C."/>
            <person name="McLeod M.P."/>
            <person name="McPherson D."/>
            <person name="Merkulov G."/>
            <person name="Milshina N.V."/>
            <person name="Mobarry C."/>
            <person name="Morris J."/>
            <person name="Moshrefi A."/>
            <person name="Mount S.M."/>
            <person name="Moy M."/>
            <person name="Murphy B."/>
            <person name="Murphy L."/>
            <person name="Muzny D.M."/>
            <person name="Nelson D.L."/>
            <person name="Nelson D.R."/>
            <person name="Nelson K.A."/>
            <person name="Nixon K."/>
            <person name="Nusskern D.R."/>
            <person name="Pacleb J.M."/>
            <person name="Palazzolo M."/>
            <person name="Pittman G.S."/>
            <person name="Pan S."/>
            <person name="Pollard J."/>
            <person name="Puri V."/>
            <person name="Reese M.G."/>
            <person name="Reinert K."/>
            <person name="Remington K."/>
            <person name="Saunders R.D.C."/>
            <person name="Scheeler F."/>
            <person name="Shen H."/>
            <person name="Shue B.C."/>
            <person name="Siden-Kiamos I."/>
            <person name="Simpson M."/>
            <person name="Skupski M.P."/>
            <person name="Smith T.J."/>
            <person name="Spier E."/>
            <person name="Spradling A.C."/>
            <person name="Stapleton M."/>
            <person name="Strong R."/>
            <person name="Sun E."/>
            <person name="Svirskas R."/>
            <person name="Tector C."/>
            <person name="Turner R."/>
            <person name="Venter E."/>
            <person name="Wang A.H."/>
            <person name="Wang X."/>
            <person name="Wang Z.-Y."/>
            <person name="Wassarman D.A."/>
            <person name="Weinstock G.M."/>
            <person name="Weissenbach J."/>
            <person name="Williams S.M."/>
            <person name="Woodage T."/>
            <person name="Worley K.C."/>
            <person name="Wu D."/>
            <person name="Yang S."/>
            <person name="Yao Q.A."/>
            <person name="Ye J."/>
            <person name="Yeh R.-F."/>
            <person name="Zaveri J.S."/>
            <person name="Zhan M."/>
            <person name="Zhang G."/>
            <person name="Zhao Q."/>
            <person name="Zheng L."/>
            <person name="Zheng X.H."/>
            <person name="Zhong F.N."/>
            <person name="Zhong W."/>
            <person name="Zhou X."/>
            <person name="Zhu S.C."/>
            <person name="Zhu X."/>
            <person name="Smith H.O."/>
            <person name="Gibbs R.A."/>
            <person name="Myers E.W."/>
            <person name="Rubin G.M."/>
            <person name="Venter J.C."/>
        </authorList>
    </citation>
    <scope>NUCLEOTIDE SEQUENCE [LARGE SCALE GENOMIC DNA]</scope>
    <source>
        <strain>Berkeley</strain>
    </source>
</reference>
<reference key="3">
    <citation type="journal article" date="2002" name="Genome Biol.">
        <title>Annotation of the Drosophila melanogaster euchromatic genome: a systematic review.</title>
        <authorList>
            <person name="Misra S."/>
            <person name="Crosby M.A."/>
            <person name="Mungall C.J."/>
            <person name="Matthews B.B."/>
            <person name="Campbell K.S."/>
            <person name="Hradecky P."/>
            <person name="Huang Y."/>
            <person name="Kaminker J.S."/>
            <person name="Millburn G.H."/>
            <person name="Prochnik S.E."/>
            <person name="Smith C.D."/>
            <person name="Tupy J.L."/>
            <person name="Whitfield E.J."/>
            <person name="Bayraktaroglu L."/>
            <person name="Berman B.P."/>
            <person name="Bettencourt B.R."/>
            <person name="Celniker S.E."/>
            <person name="de Grey A.D.N.J."/>
            <person name="Drysdale R.A."/>
            <person name="Harris N.L."/>
            <person name="Richter J."/>
            <person name="Russo S."/>
            <person name="Schroeder A.J."/>
            <person name="Shu S.Q."/>
            <person name="Stapleton M."/>
            <person name="Yamada C."/>
            <person name="Ashburner M."/>
            <person name="Gelbart W.M."/>
            <person name="Rubin G.M."/>
            <person name="Lewis S.E."/>
        </authorList>
    </citation>
    <scope>GENOME REANNOTATION</scope>
    <source>
        <strain>Berkeley</strain>
    </source>
</reference>
<reference key="4">
    <citation type="journal article" date="2002" name="Genome Biol.">
        <title>A Drosophila full-length cDNA resource.</title>
        <authorList>
            <person name="Stapleton M."/>
            <person name="Carlson J.W."/>
            <person name="Brokstein P."/>
            <person name="Yu C."/>
            <person name="Champe M."/>
            <person name="George R.A."/>
            <person name="Guarin H."/>
            <person name="Kronmiller B."/>
            <person name="Pacleb J.M."/>
            <person name="Park S."/>
            <person name="Wan K.H."/>
            <person name="Rubin G.M."/>
            <person name="Celniker S.E."/>
        </authorList>
    </citation>
    <scope>NUCLEOTIDE SEQUENCE [LARGE SCALE MRNA]</scope>
    <source>
        <strain>Berkeley</strain>
        <tissue>Testis</tissue>
    </source>
</reference>
<reference key="5">
    <citation type="submission" date="2006-10" db="EMBL/GenBank/DDBJ databases">
        <authorList>
            <person name="Stapleton M."/>
            <person name="Carlson J.W."/>
            <person name="Frise E."/>
            <person name="Kapadia B."/>
            <person name="Park S."/>
            <person name="Wan K.H."/>
            <person name="Yu C."/>
            <person name="Celniker S.E."/>
        </authorList>
    </citation>
    <scope>NUCLEOTIDE SEQUENCE [LARGE SCALE MRNA]</scope>
    <source>
        <strain>Berkeley</strain>
    </source>
</reference>
<reference key="6">
    <citation type="journal article" date="1991" name="Development">
        <title>Cells with persistent twist expression are the embryonic precursors of adult muscles in Drosophila.</title>
        <authorList>
            <person name="Bate M."/>
            <person name="Rushton E."/>
            <person name="Currie D.A."/>
        </authorList>
    </citation>
    <scope>TISSUE SPECIFICITY</scope>
</reference>
<reference key="7">
    <citation type="journal article" date="2008" name="J. Proteome Res.">
        <title>Phosphoproteome analysis of Drosophila melanogaster embryos.</title>
        <authorList>
            <person name="Zhai B."/>
            <person name="Villen J."/>
            <person name="Beausoleil S.A."/>
            <person name="Mintseris J."/>
            <person name="Gygi S.P."/>
        </authorList>
    </citation>
    <scope>PHOSPHORYLATION [LARGE SCALE ANALYSIS] AT SER-325 AND SER-328</scope>
    <scope>IDENTIFICATION BY MASS SPECTROMETRY</scope>
    <source>
        <tissue>Embryo</tissue>
    </source>
</reference>
<reference key="8">
    <citation type="journal article" date="2012" name="PLoS Genet.">
        <title>Akirin links twist-regulated transcription with the Brahma chromatin remodeling complex during embryogenesis.</title>
        <authorList>
            <person name="Nowak S.J."/>
            <person name="Aihara H."/>
            <person name="Gonzalez K."/>
            <person name="Nibu Y."/>
            <person name="Baylies M.K."/>
        </authorList>
    </citation>
    <scope>INTERACTION WITH AKIRIN</scope>
</reference>
<dbReference type="EMBL" id="X12506">
    <property type="protein sequence ID" value="CAA31024.1"/>
    <property type="molecule type" value="Genomic_DNA"/>
</dbReference>
<dbReference type="EMBL" id="X14569">
    <property type="protein sequence ID" value="CAA32707.1"/>
    <property type="molecule type" value="mRNA"/>
</dbReference>
<dbReference type="EMBL" id="AE013599">
    <property type="protein sequence ID" value="AAF46941.1"/>
    <property type="molecule type" value="Genomic_DNA"/>
</dbReference>
<dbReference type="EMBL" id="AE013599">
    <property type="protein sequence ID" value="ABC66041.1"/>
    <property type="molecule type" value="Genomic_DNA"/>
</dbReference>
<dbReference type="EMBL" id="AY075213">
    <property type="protein sequence ID" value="AAL68080.1"/>
    <property type="molecule type" value="mRNA"/>
</dbReference>
<dbReference type="EMBL" id="AY118454">
    <property type="protein sequence ID" value="AAM49823.1"/>
    <property type="molecule type" value="mRNA"/>
</dbReference>
<dbReference type="EMBL" id="BT025192">
    <property type="protein sequence ID" value="ABF17883.1"/>
    <property type="molecule type" value="mRNA"/>
</dbReference>
<dbReference type="PIR" id="S00995">
    <property type="entry name" value="S00995"/>
</dbReference>
<dbReference type="RefSeq" id="NP_001033967.1">
    <property type="nucleotide sequence ID" value="NM_001038878.2"/>
</dbReference>
<dbReference type="RefSeq" id="NP_001286752.1">
    <property type="nucleotide sequence ID" value="NM_001299823.1"/>
</dbReference>
<dbReference type="RefSeq" id="NP_523816.2">
    <property type="nucleotide sequence ID" value="NM_079092.3"/>
</dbReference>
<dbReference type="SMR" id="P10627"/>
<dbReference type="BioGRID" id="63264">
    <property type="interactions" value="16"/>
</dbReference>
<dbReference type="FunCoup" id="P10627">
    <property type="interactions" value="74"/>
</dbReference>
<dbReference type="IntAct" id="P10627">
    <property type="interactions" value="5"/>
</dbReference>
<dbReference type="STRING" id="7227.FBpp0311714"/>
<dbReference type="iPTMnet" id="P10627"/>
<dbReference type="PaxDb" id="7227-FBpp0071864"/>
<dbReference type="EnsemblMetazoa" id="FBtr0071953">
    <property type="protein sequence ID" value="FBpp0071864"/>
    <property type="gene ID" value="FBgn0003900"/>
</dbReference>
<dbReference type="EnsemblMetazoa" id="FBtr0100130">
    <property type="protein sequence ID" value="FBpp0099476"/>
    <property type="gene ID" value="FBgn0003900"/>
</dbReference>
<dbReference type="EnsemblMetazoa" id="FBtr0345653">
    <property type="protein sequence ID" value="FBpp0311714"/>
    <property type="gene ID" value="FBgn0003900"/>
</dbReference>
<dbReference type="GeneID" id="37655"/>
<dbReference type="KEGG" id="dme:Dmel_CG2956"/>
<dbReference type="UCSC" id="CG2956-RA">
    <property type="organism name" value="d. melanogaster"/>
</dbReference>
<dbReference type="UCSC" id="CG2956-RB">
    <property type="organism name" value="d. melanogaster"/>
</dbReference>
<dbReference type="AGR" id="FB:FBgn0003900"/>
<dbReference type="CTD" id="37655"/>
<dbReference type="FlyBase" id="FBgn0003900">
    <property type="gene designation" value="twi"/>
</dbReference>
<dbReference type="VEuPathDB" id="VectorBase:FBgn0003900"/>
<dbReference type="eggNOG" id="KOG4447">
    <property type="taxonomic scope" value="Eukaryota"/>
</dbReference>
<dbReference type="GeneTree" id="ENSGT00940000172846"/>
<dbReference type="HOGENOM" id="CLU_529215_0_0_1"/>
<dbReference type="InParanoid" id="P10627"/>
<dbReference type="OMA" id="SSDYDCQ"/>
<dbReference type="OrthoDB" id="8583783at2759"/>
<dbReference type="PhylomeDB" id="P10627"/>
<dbReference type="SignaLink" id="P10627"/>
<dbReference type="BioGRID-ORCS" id="37655">
    <property type="hits" value="0 hits in 3 CRISPR screens"/>
</dbReference>
<dbReference type="GenomeRNAi" id="37655"/>
<dbReference type="PRO" id="PR:P10627"/>
<dbReference type="Proteomes" id="UP000000803">
    <property type="component" value="Chromosome 2R"/>
</dbReference>
<dbReference type="Bgee" id="FBgn0003900">
    <property type="expression patterns" value="Expressed in muscle cell in digestive tract and 36 other cell types or tissues"/>
</dbReference>
<dbReference type="ExpressionAtlas" id="P10627">
    <property type="expression patterns" value="baseline and differential"/>
</dbReference>
<dbReference type="GO" id="GO:0005737">
    <property type="term" value="C:cytoplasm"/>
    <property type="evidence" value="ECO:0000314"/>
    <property type="project" value="FlyBase"/>
</dbReference>
<dbReference type="GO" id="GO:0005634">
    <property type="term" value="C:nucleus"/>
    <property type="evidence" value="ECO:0000314"/>
    <property type="project" value="UniProtKB"/>
</dbReference>
<dbReference type="GO" id="GO:0003677">
    <property type="term" value="F:DNA binding"/>
    <property type="evidence" value="ECO:0000314"/>
    <property type="project" value="UniProtKB"/>
</dbReference>
<dbReference type="GO" id="GO:0000981">
    <property type="term" value="F:DNA-binding transcription factor activity, RNA polymerase II-specific"/>
    <property type="evidence" value="ECO:0000314"/>
    <property type="project" value="FlyBase"/>
</dbReference>
<dbReference type="GO" id="GO:0046982">
    <property type="term" value="F:protein heterodimerization activity"/>
    <property type="evidence" value="ECO:0000353"/>
    <property type="project" value="UniProtKB"/>
</dbReference>
<dbReference type="GO" id="GO:0042803">
    <property type="term" value="F:protein homodimerization activity"/>
    <property type="evidence" value="ECO:0000353"/>
    <property type="project" value="UniProtKB"/>
</dbReference>
<dbReference type="GO" id="GO:0000977">
    <property type="term" value="F:RNA polymerase II transcription regulatory region sequence-specific DNA binding"/>
    <property type="evidence" value="ECO:0000318"/>
    <property type="project" value="GO_Central"/>
</dbReference>
<dbReference type="GO" id="GO:0031032">
    <property type="term" value="P:actomyosin structure organization"/>
    <property type="evidence" value="ECO:0000315"/>
    <property type="project" value="FlyBase"/>
</dbReference>
<dbReference type="GO" id="GO:0032502">
    <property type="term" value="P:developmental process"/>
    <property type="evidence" value="ECO:0000318"/>
    <property type="project" value="GO_Central"/>
</dbReference>
<dbReference type="GO" id="GO:0007499">
    <property type="term" value="P:ectoderm and mesoderm interaction"/>
    <property type="evidence" value="ECO:0000303"/>
    <property type="project" value="FlyBase"/>
</dbReference>
<dbReference type="GO" id="GO:0007369">
    <property type="term" value="P:gastrulation"/>
    <property type="evidence" value="ECO:0000315"/>
    <property type="project" value="UniProtKB"/>
</dbReference>
<dbReference type="GO" id="GO:0010004">
    <property type="term" value="P:gastrulation involving germ band extension"/>
    <property type="evidence" value="ECO:0000304"/>
    <property type="project" value="FlyBase"/>
</dbReference>
<dbReference type="GO" id="GO:0007507">
    <property type="term" value="P:heart development"/>
    <property type="evidence" value="ECO:0000304"/>
    <property type="project" value="FlyBase"/>
</dbReference>
<dbReference type="GO" id="GO:0007443">
    <property type="term" value="P:Malpighian tubule morphogenesis"/>
    <property type="evidence" value="ECO:0000315"/>
    <property type="project" value="FlyBase"/>
</dbReference>
<dbReference type="GO" id="GO:0007498">
    <property type="term" value="P:mesoderm development"/>
    <property type="evidence" value="ECO:0000270"/>
    <property type="project" value="FlyBase"/>
</dbReference>
<dbReference type="GO" id="GO:0001710">
    <property type="term" value="P:mesodermal cell fate commitment"/>
    <property type="evidence" value="ECO:0000315"/>
    <property type="project" value="UniProtKB"/>
</dbReference>
<dbReference type="GO" id="GO:0007501">
    <property type="term" value="P:mesodermal cell fate specification"/>
    <property type="evidence" value="ECO:0000304"/>
    <property type="project" value="FlyBase"/>
</dbReference>
<dbReference type="GO" id="GO:0055001">
    <property type="term" value="P:muscle cell development"/>
    <property type="evidence" value="ECO:0000315"/>
    <property type="project" value="FlyBase"/>
</dbReference>
<dbReference type="GO" id="GO:0045944">
    <property type="term" value="P:positive regulation of transcription by RNA polymerase II"/>
    <property type="evidence" value="ECO:0000314"/>
    <property type="project" value="FlyBase"/>
</dbReference>
<dbReference type="GO" id="GO:0016202">
    <property type="term" value="P:regulation of striated muscle tissue development"/>
    <property type="evidence" value="ECO:0000315"/>
    <property type="project" value="UniProtKB"/>
</dbReference>
<dbReference type="GO" id="GO:0006357">
    <property type="term" value="P:regulation of transcription by RNA polymerase II"/>
    <property type="evidence" value="ECO:0000318"/>
    <property type="project" value="GO_Central"/>
</dbReference>
<dbReference type="GO" id="GO:0007435">
    <property type="term" value="P:salivary gland morphogenesis"/>
    <property type="evidence" value="ECO:0000315"/>
    <property type="project" value="FlyBase"/>
</dbReference>
<dbReference type="GO" id="GO:0007370">
    <property type="term" value="P:ventral furrow formation"/>
    <property type="evidence" value="ECO:0000315"/>
    <property type="project" value="UniProtKB"/>
</dbReference>
<dbReference type="CDD" id="cd11464">
    <property type="entry name" value="bHLH_TS_TWIST"/>
    <property type="match status" value="1"/>
</dbReference>
<dbReference type="FunFam" id="4.10.280.10:FF:000030">
    <property type="entry name" value="Twist transcription factor"/>
    <property type="match status" value="1"/>
</dbReference>
<dbReference type="Gene3D" id="4.10.280.10">
    <property type="entry name" value="Helix-loop-helix DNA-binding domain"/>
    <property type="match status" value="1"/>
</dbReference>
<dbReference type="InterPro" id="IPR011598">
    <property type="entry name" value="bHLH_dom"/>
</dbReference>
<dbReference type="InterPro" id="IPR050283">
    <property type="entry name" value="E-box_TF_Regulators"/>
</dbReference>
<dbReference type="InterPro" id="IPR036638">
    <property type="entry name" value="HLH_DNA-bd_sf"/>
</dbReference>
<dbReference type="InterPro" id="IPR015789">
    <property type="entry name" value="Twist-rel_bHLH"/>
</dbReference>
<dbReference type="PANTHER" id="PTHR23349">
    <property type="entry name" value="BASIC HELIX-LOOP-HELIX TRANSCRIPTION FACTOR, TWIST"/>
    <property type="match status" value="1"/>
</dbReference>
<dbReference type="PANTHER" id="PTHR23349:SF50">
    <property type="entry name" value="PROTEIN TWIST"/>
    <property type="match status" value="1"/>
</dbReference>
<dbReference type="Pfam" id="PF00010">
    <property type="entry name" value="HLH"/>
    <property type="match status" value="1"/>
</dbReference>
<dbReference type="SMART" id="SM00353">
    <property type="entry name" value="HLH"/>
    <property type="match status" value="1"/>
</dbReference>
<dbReference type="SUPFAM" id="SSF47459">
    <property type="entry name" value="HLH, helix-loop-helix DNA-binding domain"/>
    <property type="match status" value="1"/>
</dbReference>
<dbReference type="PROSITE" id="PS50888">
    <property type="entry name" value="BHLH"/>
    <property type="match status" value="1"/>
</dbReference>
<name>TWIST_DROME</name>
<feature type="chain" id="PRO_0000127478" description="Protein twist">
    <location>
        <begin position="1"/>
        <end position="490"/>
    </location>
</feature>
<feature type="domain" description="bHLH" evidence="1">
    <location>
        <begin position="362"/>
        <end position="413"/>
    </location>
</feature>
<feature type="region of interest" description="Disordered" evidence="2">
    <location>
        <begin position="48"/>
        <end position="72"/>
    </location>
</feature>
<feature type="region of interest" description="Disordered" evidence="2">
    <location>
        <begin position="96"/>
        <end position="165"/>
    </location>
</feature>
<feature type="region of interest" description="Disordered" evidence="2">
    <location>
        <begin position="244"/>
        <end position="264"/>
    </location>
</feature>
<feature type="region of interest" description="Disordered" evidence="2">
    <location>
        <begin position="330"/>
        <end position="361"/>
    </location>
</feature>
<feature type="compositionally biased region" description="Basic residues" evidence="2">
    <location>
        <begin position="54"/>
        <end position="68"/>
    </location>
</feature>
<feature type="compositionally biased region" description="Low complexity" evidence="2">
    <location>
        <begin position="102"/>
        <end position="134"/>
    </location>
</feature>
<feature type="compositionally biased region" description="Low complexity" evidence="2">
    <location>
        <begin position="244"/>
        <end position="263"/>
    </location>
</feature>
<feature type="compositionally biased region" description="Basic residues" evidence="2">
    <location>
        <begin position="339"/>
        <end position="351"/>
    </location>
</feature>
<feature type="modified residue" description="Phosphoserine" evidence="4">
    <location>
        <position position="325"/>
    </location>
</feature>
<feature type="modified residue" description="Phosphoserine" evidence="4">
    <location>
        <position position="328"/>
    </location>
</feature>
<feature type="sequence conflict" description="In Ref. 1; CAA31024/CAA32707." evidence="7" ref="1">
    <original>Q</original>
    <variation>H</variation>
    <location>
        <position position="44"/>
    </location>
</feature>
<feature type="sequence conflict" description="In Ref. 1; CAA31024/CAA32707 and 4; AAL68080." evidence="7" ref="1 4">
    <original>T</original>
    <variation>A</variation>
    <location>
        <position position="112"/>
    </location>
</feature>
<feature type="sequence conflict" description="In Ref. 1; CAA31024/CAA32707." evidence="7" ref="1">
    <original>L</original>
    <variation>Q</variation>
    <location>
        <position position="251"/>
    </location>
</feature>
<feature type="sequence conflict" description="In Ref. 4; AAL68080/AAM49823." evidence="7" ref="4">
    <location>
        <position position="251"/>
    </location>
</feature>
<feature type="sequence conflict" description="In Ref. 1; CAA31024." evidence="7" ref="1">
    <original>A</original>
    <variation>G</variation>
    <location>
        <position position="453"/>
    </location>
</feature>
<accession>P10627</accession>
<accession>Q1LZ34</accession>
<accession>Q8MT07</accession>
<accession>Q8T8Y9</accession>
<accession>Q9W1W1</accession>
<comment type="function">
    <text evidence="6">Involved in the establishment and dorsoventral patterning of germ layers in the embryo.</text>
</comment>
<comment type="subunit">
    <text evidence="5">Efficient DNA binding requires dimerization with another bHLH protein. Homodimer. Interacts with akirin (PubMed:22396663).</text>
</comment>
<comment type="subcellular location">
    <subcellularLocation>
        <location evidence="1 6">Nucleus</location>
    </subcellularLocation>
</comment>
<comment type="tissue specificity">
    <text evidence="3">Expressed in embryonic abdomen; a single cell ventrally, pairs of cells laterally and three cells dorsally in each hemisegment. In the thorax, there are patches of cells associated with the imaginal disks. During larval development, cells proliferate and, in the abdomen, they form ventral, lateral and dorsal clusters, which are the precursors of the adult abdominal muscles. In the thorax, they form populations of cells in the imaginal disks that correspond to the adepithelial cells.</text>
</comment>
<comment type="developmental stage">
    <text>Expressed throughout development.</text>
</comment>
<comment type="disruption phenotype">
    <text evidence="6">Embryos fail to form the ventral furrow at gastrulation and lack mesoderm and all internal organs.</text>
</comment>
<protein>
    <recommendedName>
        <fullName>Protein twist</fullName>
    </recommendedName>
</protein>
<organism>
    <name type="scientific">Drosophila melanogaster</name>
    <name type="common">Fruit fly</name>
    <dbReference type="NCBI Taxonomy" id="7227"/>
    <lineage>
        <taxon>Eukaryota</taxon>
        <taxon>Metazoa</taxon>
        <taxon>Ecdysozoa</taxon>
        <taxon>Arthropoda</taxon>
        <taxon>Hexapoda</taxon>
        <taxon>Insecta</taxon>
        <taxon>Pterygota</taxon>
        <taxon>Neoptera</taxon>
        <taxon>Endopterygota</taxon>
        <taxon>Diptera</taxon>
        <taxon>Brachycera</taxon>
        <taxon>Muscomorpha</taxon>
        <taxon>Ephydroidea</taxon>
        <taxon>Drosophilidae</taxon>
        <taxon>Drosophila</taxon>
        <taxon>Sophophora</taxon>
    </lineage>
</organism>
<gene>
    <name type="primary">twi</name>
    <name type="ORF">CG2956</name>
</gene>
<sequence>MMSARSVSPKVLLDISYKPTLPNIMELQNNVIKLIQVEQQAYMQSGYQLQHQQQHLHSHQHHQQHHQQQHAQYAPLPSEYAAYGITELEDTDYNIPSNEVLSTSSNQSAQSTSLELNNNNTSSNTNSSGNNPSGFDGQASSGSSWNEHGKRARSSGDYDCQTGGSLVMQPEHKKLIHQQQQQQQQHQQQIYVDYLPTTVDEVASAQSCPGVQSTCTSPQSHFDFPDEELPEHKAQVFLPLYNNQQQQSQQLQQQQPHQQSHAQMHFQNAYRQSFEGYEPANSLNGSAYSSSDRDDMEYARHNALSSVSDLNGGVMSPACLADDGSAGSLLDGSDAGGKAFRKPRRRLKRKPSKTEETDEFSNQRVMANVRERQRTQSLNDAFKSLQQIIPTLPSDKLSKIQTLKLATRYIDFLCRMLSSSDISLLKALEAQGSPSAYGSASSLLSAAANGAEADLKCLRKANGAPIIPPEKLSYLFGVWRMEGDAQHQKA</sequence>